<comment type="function">
    <text evidence="1 3">Stimulator of protein export for NES-containing proteins (By similarity). Also plays a role in mRNA nuclear export.</text>
</comment>
<comment type="subcellular location">
    <subcellularLocation>
        <location evidence="1">Nucleus</location>
    </subcellularLocation>
</comment>
<evidence type="ECO:0000250" key="1"/>
<evidence type="ECO:0000255" key="2">
    <source>
        <dbReference type="PROSITE-ProRule" id="PRU00137"/>
    </source>
</evidence>
<evidence type="ECO:0000269" key="3">
    <source>
    </source>
</evidence>
<keyword id="KW-0509">mRNA transport</keyword>
<keyword id="KW-0539">Nucleus</keyword>
<keyword id="KW-0653">Protein transport</keyword>
<keyword id="KW-1185">Reference proteome</keyword>
<keyword id="KW-0813">Transport</keyword>
<feature type="chain" id="PRO_0000373860" description="NTF2-related export protein 1">
    <location>
        <begin position="1"/>
        <end position="115"/>
    </location>
</feature>
<feature type="domain" description="NTF2" evidence="2">
    <location>
        <begin position="7"/>
        <end position="115"/>
    </location>
</feature>
<proteinExistence type="inferred from homology"/>
<name>NXT1_SCHPO</name>
<gene>
    <name type="primary">nxt1</name>
    <name type="ORF">SPAPB1A10.03</name>
</gene>
<protein>
    <recommendedName>
        <fullName>NTF2-related export protein 1</fullName>
    </recommendedName>
    <alternativeName>
        <fullName>p15</fullName>
    </alternativeName>
</protein>
<dbReference type="EMBL" id="CU329670">
    <property type="protein sequence ID" value="CAC21476.2"/>
    <property type="molecule type" value="Genomic_DNA"/>
</dbReference>
<dbReference type="RefSeq" id="NP_593517.2">
    <property type="nucleotide sequence ID" value="NM_001018951.2"/>
</dbReference>
<dbReference type="SMR" id="P0CAN8"/>
<dbReference type="BioGRID" id="280058">
    <property type="interactions" value="20"/>
</dbReference>
<dbReference type="ComplexPortal" id="CPX-8938">
    <property type="entry name" value="MEX67-NXT1 mRNA nuclear export factor complex"/>
</dbReference>
<dbReference type="FunCoup" id="P0CAN8">
    <property type="interactions" value="249"/>
</dbReference>
<dbReference type="STRING" id="284812.P0CAN8"/>
<dbReference type="PaxDb" id="4896-SPAPB1A10.03.1"/>
<dbReference type="EnsemblFungi" id="SPAPB1A10.03.1">
    <property type="protein sequence ID" value="SPAPB1A10.03.1:pep"/>
    <property type="gene ID" value="SPAPB1A10.03"/>
</dbReference>
<dbReference type="GeneID" id="2543644"/>
<dbReference type="KEGG" id="spo:2543644"/>
<dbReference type="PomBase" id="SPAPB1A10.03">
    <property type="gene designation" value="nxt1"/>
</dbReference>
<dbReference type="VEuPathDB" id="FungiDB:SPAPB1A10.03"/>
<dbReference type="eggNOG" id="KOG4353">
    <property type="taxonomic scope" value="Eukaryota"/>
</dbReference>
<dbReference type="HOGENOM" id="CLU_2110387_0_0_1"/>
<dbReference type="InParanoid" id="P0CAN8"/>
<dbReference type="OMA" id="SMIANFP"/>
<dbReference type="Reactome" id="R-SPO-159236">
    <property type="pathway name" value="Transport of Mature mRNA derived from an Intron-Containing Transcript"/>
</dbReference>
<dbReference type="PRO" id="PR:P0CAN8"/>
<dbReference type="Proteomes" id="UP000002485">
    <property type="component" value="Chromosome I"/>
</dbReference>
<dbReference type="GO" id="GO:0044613">
    <property type="term" value="C:nuclear pore central transport channel"/>
    <property type="evidence" value="ECO:0000318"/>
    <property type="project" value="GO_Central"/>
</dbReference>
<dbReference type="GO" id="GO:0042272">
    <property type="term" value="C:nuclear RNA export factor complex"/>
    <property type="evidence" value="ECO:0000353"/>
    <property type="project" value="PomBase"/>
</dbReference>
<dbReference type="GO" id="GO:0016973">
    <property type="term" value="P:poly(A)+ mRNA export from nucleus"/>
    <property type="evidence" value="ECO:0000353"/>
    <property type="project" value="PomBase"/>
</dbReference>
<dbReference type="GO" id="GO:0015031">
    <property type="term" value="P:protein transport"/>
    <property type="evidence" value="ECO:0007669"/>
    <property type="project" value="UniProtKB-KW"/>
</dbReference>
<dbReference type="GO" id="GO:0000054">
    <property type="term" value="P:ribosomal subunit export from nucleus"/>
    <property type="evidence" value="ECO:0000266"/>
    <property type="project" value="PomBase"/>
</dbReference>
<dbReference type="CDD" id="cd00780">
    <property type="entry name" value="NTF2"/>
    <property type="match status" value="1"/>
</dbReference>
<dbReference type="Gene3D" id="3.10.450.50">
    <property type="match status" value="1"/>
</dbReference>
<dbReference type="InterPro" id="IPR045875">
    <property type="entry name" value="NTF2"/>
</dbReference>
<dbReference type="InterPro" id="IPR032710">
    <property type="entry name" value="NTF2-like_dom_sf"/>
</dbReference>
<dbReference type="InterPro" id="IPR002075">
    <property type="entry name" value="NTF2_dom"/>
</dbReference>
<dbReference type="InterPro" id="IPR018222">
    <property type="entry name" value="Nuclear_transport_factor_2_euk"/>
</dbReference>
<dbReference type="PANTHER" id="PTHR12612">
    <property type="entry name" value="NUCLEAR TRANSPORT FACTOR 2"/>
    <property type="match status" value="1"/>
</dbReference>
<dbReference type="Pfam" id="PF02136">
    <property type="entry name" value="NTF2"/>
    <property type="match status" value="1"/>
</dbReference>
<dbReference type="SUPFAM" id="SSF54427">
    <property type="entry name" value="NTF2-like"/>
    <property type="match status" value="1"/>
</dbReference>
<dbReference type="PROSITE" id="PS50177">
    <property type="entry name" value="NTF2_DOMAIN"/>
    <property type="match status" value="1"/>
</dbReference>
<sequence length="115" mass="13395">MESSVKYAQEFVQRYYSSLDTNRNGIAEFYRENSLILWNGKPMQVTEFTSMIVNLPYSKTKVEDFDSQQVMGNDMNIIIVVSGTIRFDGKKPHVFSYVSFYCIYLLVLRSSTNFL</sequence>
<reference key="1">
    <citation type="journal article" date="2002" name="Nature">
        <title>The genome sequence of Schizosaccharomyces pombe.</title>
        <authorList>
            <person name="Wood V."/>
            <person name="Gwilliam R."/>
            <person name="Rajandream M.A."/>
            <person name="Lyne M.H."/>
            <person name="Lyne R."/>
            <person name="Stewart A."/>
            <person name="Sgouros J.G."/>
            <person name="Peat N."/>
            <person name="Hayles J."/>
            <person name="Baker S.G."/>
            <person name="Basham D."/>
            <person name="Bowman S."/>
            <person name="Brooks K."/>
            <person name="Brown D."/>
            <person name="Brown S."/>
            <person name="Chillingworth T."/>
            <person name="Churcher C.M."/>
            <person name="Collins M."/>
            <person name="Connor R."/>
            <person name="Cronin A."/>
            <person name="Davis P."/>
            <person name="Feltwell T."/>
            <person name="Fraser A."/>
            <person name="Gentles S."/>
            <person name="Goble A."/>
            <person name="Hamlin N."/>
            <person name="Harris D.E."/>
            <person name="Hidalgo J."/>
            <person name="Hodgson G."/>
            <person name="Holroyd S."/>
            <person name="Hornsby T."/>
            <person name="Howarth S."/>
            <person name="Huckle E.J."/>
            <person name="Hunt S."/>
            <person name="Jagels K."/>
            <person name="James K.D."/>
            <person name="Jones L."/>
            <person name="Jones M."/>
            <person name="Leather S."/>
            <person name="McDonald S."/>
            <person name="McLean J."/>
            <person name="Mooney P."/>
            <person name="Moule S."/>
            <person name="Mungall K.L."/>
            <person name="Murphy L.D."/>
            <person name="Niblett D."/>
            <person name="Odell C."/>
            <person name="Oliver K."/>
            <person name="O'Neil S."/>
            <person name="Pearson D."/>
            <person name="Quail M.A."/>
            <person name="Rabbinowitsch E."/>
            <person name="Rutherford K.M."/>
            <person name="Rutter S."/>
            <person name="Saunders D."/>
            <person name="Seeger K."/>
            <person name="Sharp S."/>
            <person name="Skelton J."/>
            <person name="Simmonds M.N."/>
            <person name="Squares R."/>
            <person name="Squares S."/>
            <person name="Stevens K."/>
            <person name="Taylor K."/>
            <person name="Taylor R.G."/>
            <person name="Tivey A."/>
            <person name="Walsh S.V."/>
            <person name="Warren T."/>
            <person name="Whitehead S."/>
            <person name="Woodward J.R."/>
            <person name="Volckaert G."/>
            <person name="Aert R."/>
            <person name="Robben J."/>
            <person name="Grymonprez B."/>
            <person name="Weltjens I."/>
            <person name="Vanstreels E."/>
            <person name="Rieger M."/>
            <person name="Schaefer M."/>
            <person name="Mueller-Auer S."/>
            <person name="Gabel C."/>
            <person name="Fuchs M."/>
            <person name="Duesterhoeft A."/>
            <person name="Fritzc C."/>
            <person name="Holzer E."/>
            <person name="Moestl D."/>
            <person name="Hilbert H."/>
            <person name="Borzym K."/>
            <person name="Langer I."/>
            <person name="Beck A."/>
            <person name="Lehrach H."/>
            <person name="Reinhardt R."/>
            <person name="Pohl T.M."/>
            <person name="Eger P."/>
            <person name="Zimmermann W."/>
            <person name="Wedler H."/>
            <person name="Wambutt R."/>
            <person name="Purnelle B."/>
            <person name="Goffeau A."/>
            <person name="Cadieu E."/>
            <person name="Dreano S."/>
            <person name="Gloux S."/>
            <person name="Lelaure V."/>
            <person name="Mottier S."/>
            <person name="Galibert F."/>
            <person name="Aves S.J."/>
            <person name="Xiang Z."/>
            <person name="Hunt C."/>
            <person name="Moore K."/>
            <person name="Hurst S.M."/>
            <person name="Lucas M."/>
            <person name="Rochet M."/>
            <person name="Gaillardin C."/>
            <person name="Tallada V.A."/>
            <person name="Garzon A."/>
            <person name="Thode G."/>
            <person name="Daga R.R."/>
            <person name="Cruzado L."/>
            <person name="Jimenez J."/>
            <person name="Sanchez M."/>
            <person name="del Rey F."/>
            <person name="Benito J."/>
            <person name="Dominguez A."/>
            <person name="Revuelta J.L."/>
            <person name="Moreno S."/>
            <person name="Armstrong J."/>
            <person name="Forsburg S.L."/>
            <person name="Cerutti L."/>
            <person name="Lowe T."/>
            <person name="McCombie W.R."/>
            <person name="Paulsen I."/>
            <person name="Potashkin J."/>
            <person name="Shpakovski G.V."/>
            <person name="Ussery D."/>
            <person name="Barrell B.G."/>
            <person name="Nurse P."/>
        </authorList>
    </citation>
    <scope>NUCLEOTIDE SEQUENCE [LARGE SCALE GENOMIC DNA]</scope>
    <source>
        <strain>972 / ATCC 24843</strain>
    </source>
</reference>
<reference key="2">
    <citation type="unpublished observations" date="2008-09">
        <authorList>
            <consortium name="Schizosaccharomyces pombe GeneDB"/>
        </authorList>
    </citation>
    <scope>REVISION OF GENE MODEL</scope>
</reference>
<reference key="3">
    <citation type="journal article" date="2004" name="J. Biol. Chem.">
        <title>Conserved nuclear export sequences in Schizosaccharomyces pombe Mex67 and human TAP function in mRNA export by direct nuclear pore interactions.</title>
        <authorList>
            <person name="Thakurta A.G."/>
            <person name="Gopal G."/>
            <person name="Yoon J.H."/>
            <person name="Saha T."/>
            <person name="Dhar R."/>
        </authorList>
    </citation>
    <scope>FUNCTION</scope>
</reference>
<accession>P0CAN8</accession>
<accession>Q9HDY6</accession>
<organism>
    <name type="scientific">Schizosaccharomyces pombe (strain 972 / ATCC 24843)</name>
    <name type="common">Fission yeast</name>
    <dbReference type="NCBI Taxonomy" id="284812"/>
    <lineage>
        <taxon>Eukaryota</taxon>
        <taxon>Fungi</taxon>
        <taxon>Dikarya</taxon>
        <taxon>Ascomycota</taxon>
        <taxon>Taphrinomycotina</taxon>
        <taxon>Schizosaccharomycetes</taxon>
        <taxon>Schizosaccharomycetales</taxon>
        <taxon>Schizosaccharomycetaceae</taxon>
        <taxon>Schizosaccharomyces</taxon>
    </lineage>
</organism>